<proteinExistence type="inferred from homology"/>
<organism>
    <name type="scientific">Formosa agariphila (strain DSM 15362 / KCTC 12365 / LMG 23005 / KMM 3901 / M-2Alg 35-1)</name>
    <dbReference type="NCBI Taxonomy" id="1347342"/>
    <lineage>
        <taxon>Bacteria</taxon>
        <taxon>Pseudomonadati</taxon>
        <taxon>Bacteroidota</taxon>
        <taxon>Flavobacteriia</taxon>
        <taxon>Flavobacteriales</taxon>
        <taxon>Flavobacteriaceae</taxon>
        <taxon>Formosa</taxon>
    </lineage>
</organism>
<evidence type="ECO:0000255" key="1">
    <source>
        <dbReference type="PROSITE-ProRule" id="PRU00303"/>
    </source>
</evidence>
<evidence type="ECO:0000269" key="2">
    <source>
    </source>
</evidence>
<evidence type="ECO:0000303" key="3">
    <source>
    </source>
</evidence>
<evidence type="ECO:0000305" key="4">
    <source>
    </source>
</evidence>
<evidence type="ECO:0000305" key="5">
    <source ref="2"/>
</evidence>
<dbReference type="EMBL" id="HG315671">
    <property type="protein sequence ID" value="CDF79908.1"/>
    <property type="status" value="ALT_INIT"/>
    <property type="molecule type" value="Genomic_DNA"/>
</dbReference>
<dbReference type="RefSeq" id="WP_051774705.1">
    <property type="nucleotide sequence ID" value="NZ_HG315671.1"/>
</dbReference>
<dbReference type="STRING" id="1347342.BN863_21960"/>
<dbReference type="PATRIC" id="fig|1347342.6.peg.2203"/>
<dbReference type="eggNOG" id="COG4677">
    <property type="taxonomic scope" value="Bacteria"/>
</dbReference>
<dbReference type="HOGENOM" id="CLU_696291_0_0_10"/>
<dbReference type="Proteomes" id="UP000016160">
    <property type="component" value="Chromosome"/>
</dbReference>
<dbReference type="GO" id="GO:0009279">
    <property type="term" value="C:cell outer membrane"/>
    <property type="evidence" value="ECO:0007669"/>
    <property type="project" value="UniProtKB-SubCell"/>
</dbReference>
<dbReference type="InterPro" id="IPR032342">
    <property type="entry name" value="DUF4861"/>
</dbReference>
<dbReference type="Pfam" id="PF16153">
    <property type="entry name" value="DUF4861"/>
    <property type="match status" value="1"/>
</dbReference>
<dbReference type="PROSITE" id="PS51257">
    <property type="entry name" value="PROKAR_LIPOPROTEIN"/>
    <property type="match status" value="1"/>
</dbReference>
<comment type="function">
    <text evidence="4">May be involved in ulvan degradation (Probable). Ulvan is the main polysaccharide component of the Ulvales (green seaweed) cell wall. It is composed of disaccharide building blocks comprising 3-sulfated rhamnose (Rha3S) linked to D-glucuronic acid (GlcA), L-iduronic acid (IduA), or D-xylose (Xyl) (Probable).</text>
</comment>
<comment type="subcellular location">
    <subcellularLocation>
        <location evidence="2">Cell outer membrane</location>
        <topology evidence="1">Lipid-anchor</topology>
    </subcellularLocation>
</comment>
<comment type="sequence caution" evidence="5">
    <conflict type="erroneous initiation">
        <sequence resource="EMBL-CDS" id="CDF79908"/>
    </conflict>
    <text>Truncated N-terminus.</text>
</comment>
<feature type="signal peptide" evidence="1">
    <location>
        <begin position="1"/>
        <end position="18"/>
    </location>
</feature>
<feature type="chain" id="PRO_0000448318" description="Uncharacterized protein P7">
    <location>
        <begin position="19"/>
        <end position="395"/>
    </location>
</feature>
<feature type="lipid moiety-binding region" description="N-palmitoyl cysteine" evidence="1">
    <location>
        <position position="19"/>
    </location>
</feature>
<feature type="lipid moiety-binding region" description="S-diacylglycerol cysteine" evidence="1">
    <location>
        <position position="19"/>
    </location>
</feature>
<sequence>MKHVIMLYFIAAATLFSSCAKQDSEHRLITVKNSLDLPRAFETIEISKSDIQLHTGERFEDFSIQDVATKAILTSQFVDEDQDGTADVLLFQPELNPNSEKQFELVKVDGGVEVDSTVYCYSRFVPERTDDYTWENNKVAFRTYGPVAQKMVEDSLPGGTLSSGIDAWLKKVEYSIIDNWYAKNDKDPGYYHIDHGEGLDNFHVGSSRGVGGSAVKVDTSYYISKNFTDYKTITTGPIRTSFILKYADWDANEKTISEEKHISLDYGNNFSRFEIHVDGTDELSVGLTLHDNKGEITQNVDQGWIAYWESEYFDSELGTAIVAPKGVMTASEYYVTSMKDRSNLYAQLNVDNNKVVYYAGFAWKESKQYPTKASWEKYIQEFSEKLNTPLEVSIQ</sequence>
<protein>
    <recommendedName>
        <fullName evidence="3">Uncharacterized protein P7</fullName>
    </recommendedName>
    <alternativeName>
        <fullName evidence="3">Polysaccharide utilization locus H protein P7</fullName>
        <shortName>PUL H protein P7</shortName>
    </alternativeName>
</protein>
<reference key="1">
    <citation type="journal article" date="2013" name="Appl. Environ. Microbiol.">
        <title>The genome of the alga-associated marine flavobacterium Formosa agariphila KMM 3901T reveals a broad potential for degradation of algal polysaccharides.</title>
        <authorList>
            <person name="Mann A.J."/>
            <person name="Hahnke R.L."/>
            <person name="Huang S."/>
            <person name="Werner J."/>
            <person name="Xing P."/>
            <person name="Barbeyron T."/>
            <person name="Huettel B."/>
            <person name="Stueber K."/>
            <person name="Reinhardt R."/>
            <person name="Harder J."/>
            <person name="Gloeckner F.O."/>
            <person name="Amann R.I."/>
            <person name="Teeling H."/>
        </authorList>
    </citation>
    <scope>NUCLEOTIDE SEQUENCE [LARGE SCALE GENOMIC DNA]</scope>
    <source>
        <strain>DSM 15362 / KCTC 12365 / LMG 23005 / KMM 3901 / M-2Alg 35-1</strain>
    </source>
</reference>
<reference key="2">
    <citation type="journal article" date="2017" name="Algal Res.">
        <title>The enzymatic ulvan depolymerisation system from the alga-associated marine flavobacterium Formosa agariphila.</title>
        <authorList>
            <person name="Salinas A."/>
            <person name="French C.E."/>
        </authorList>
    </citation>
    <scope>REVISION OF GENE MODEL</scope>
</reference>
<reference key="3">
    <citation type="journal article" date="2019" name="Nat. Chem. Biol.">
        <title>A marine bacterial enzymatic cascade degrades the algal polysaccharide ulvan.</title>
        <authorList>
            <person name="Reisky L."/>
            <person name="Prechoux A."/>
            <person name="Zuehlke M.K."/>
            <person name="Baeumgen M."/>
            <person name="Robb C.S."/>
            <person name="Gerlach N."/>
            <person name="Roret T."/>
            <person name="Stanetty C."/>
            <person name="Larocque R."/>
            <person name="Michel G."/>
            <person name="Song T."/>
            <person name="Markert S."/>
            <person name="Unfried F."/>
            <person name="Mihovilovic M.D."/>
            <person name="Trautwein-Schult A."/>
            <person name="Becher D."/>
            <person name="Schweder T."/>
            <person name="Bornscheuer U.T."/>
            <person name="Hehemann J.H."/>
        </authorList>
    </citation>
    <scope>FUNCTION</scope>
    <scope>SUBCELLULAR LOCATION</scope>
</reference>
<gene>
    <name type="ORF">BN863_21960</name>
</gene>
<keyword id="KW-0998">Cell outer membrane</keyword>
<keyword id="KW-0449">Lipoprotein</keyword>
<keyword id="KW-0472">Membrane</keyword>
<keyword id="KW-0564">Palmitate</keyword>
<keyword id="KW-1185">Reference proteome</keyword>
<keyword id="KW-0732">Signal</keyword>
<accession>T2KN67</accession>
<name>PLH7_FORAG</name>